<proteinExistence type="inferred from homology"/>
<organism>
    <name type="scientific">Shigella flexneri</name>
    <dbReference type="NCBI Taxonomy" id="623"/>
    <lineage>
        <taxon>Bacteria</taxon>
        <taxon>Pseudomonadati</taxon>
        <taxon>Pseudomonadota</taxon>
        <taxon>Gammaproteobacteria</taxon>
        <taxon>Enterobacterales</taxon>
        <taxon>Enterobacteriaceae</taxon>
        <taxon>Shigella</taxon>
    </lineage>
</organism>
<accession>P0ACE6</accession>
<accession>P23870</accession>
<accession>P77120</accession>
<name>HHA_SHIFL</name>
<protein>
    <recommendedName>
        <fullName>Hemolysin expression-modulating protein Hha</fullName>
    </recommendedName>
</protein>
<reference key="1">
    <citation type="journal article" date="2002" name="Nucleic Acids Res.">
        <title>Genome sequence of Shigella flexneri 2a: insights into pathogenicity through comparison with genomes of Escherichia coli K12 and O157.</title>
        <authorList>
            <person name="Jin Q."/>
            <person name="Yuan Z."/>
            <person name="Xu J."/>
            <person name="Wang Y."/>
            <person name="Shen Y."/>
            <person name="Lu W."/>
            <person name="Wang J."/>
            <person name="Liu H."/>
            <person name="Yang J."/>
            <person name="Yang F."/>
            <person name="Zhang X."/>
            <person name="Zhang J."/>
            <person name="Yang G."/>
            <person name="Wu H."/>
            <person name="Qu D."/>
            <person name="Dong J."/>
            <person name="Sun L."/>
            <person name="Xue Y."/>
            <person name="Zhao A."/>
            <person name="Gao Y."/>
            <person name="Zhu J."/>
            <person name="Kan B."/>
            <person name="Ding K."/>
            <person name="Chen S."/>
            <person name="Cheng H."/>
            <person name="Yao Z."/>
            <person name="He B."/>
            <person name="Chen R."/>
            <person name="Ma D."/>
            <person name="Qiang B."/>
            <person name="Wen Y."/>
            <person name="Hou Y."/>
            <person name="Yu J."/>
        </authorList>
    </citation>
    <scope>NUCLEOTIDE SEQUENCE [LARGE SCALE GENOMIC DNA]</scope>
    <source>
        <strain>301 / Serotype 2a</strain>
    </source>
</reference>
<reference key="2">
    <citation type="journal article" date="2003" name="Infect. Immun.">
        <title>Complete genome sequence and comparative genomics of Shigella flexneri serotype 2a strain 2457T.</title>
        <authorList>
            <person name="Wei J."/>
            <person name="Goldberg M.B."/>
            <person name="Burland V."/>
            <person name="Venkatesan M.M."/>
            <person name="Deng W."/>
            <person name="Fournier G."/>
            <person name="Mayhew G.F."/>
            <person name="Plunkett G. III"/>
            <person name="Rose D.J."/>
            <person name="Darling A."/>
            <person name="Mau B."/>
            <person name="Perna N.T."/>
            <person name="Payne S.M."/>
            <person name="Runyen-Janecky L.J."/>
            <person name="Zhou S."/>
            <person name="Schwartz D.C."/>
            <person name="Blattner F.R."/>
        </authorList>
    </citation>
    <scope>NUCLEOTIDE SEQUENCE [LARGE SCALE GENOMIC DNA]</scope>
    <source>
        <strain>ATCC 700930 / 2457T / Serotype 2a</strain>
    </source>
</reference>
<dbReference type="EMBL" id="AE005674">
    <property type="protein sequence ID" value="AAN42060.2"/>
    <property type="molecule type" value="Genomic_DNA"/>
</dbReference>
<dbReference type="EMBL" id="AE014073">
    <property type="protein sequence ID" value="AAP15937.1"/>
    <property type="molecule type" value="Genomic_DNA"/>
</dbReference>
<dbReference type="RefSeq" id="NP_706353.2">
    <property type="nucleotide sequence ID" value="NC_004337.2"/>
</dbReference>
<dbReference type="RefSeq" id="WP_001291435.1">
    <property type="nucleotide sequence ID" value="NZ_WPGW01000015.1"/>
</dbReference>
<dbReference type="BMRB" id="P0ACE6"/>
<dbReference type="SMR" id="P0ACE6"/>
<dbReference type="STRING" id="198214.SF0405"/>
<dbReference type="PaxDb" id="198214-SF0405"/>
<dbReference type="GeneID" id="1027731"/>
<dbReference type="KEGG" id="sfl:SF0405"/>
<dbReference type="KEGG" id="sfx:S0412"/>
<dbReference type="PATRIC" id="fig|198214.7.peg.465"/>
<dbReference type="HOGENOM" id="CLU_190629_0_0_6"/>
<dbReference type="Proteomes" id="UP000001006">
    <property type="component" value="Chromosome"/>
</dbReference>
<dbReference type="Proteomes" id="UP000002673">
    <property type="component" value="Chromosome"/>
</dbReference>
<dbReference type="GO" id="GO:0003677">
    <property type="term" value="F:DNA binding"/>
    <property type="evidence" value="ECO:0007669"/>
    <property type="project" value="UniProtKB-KW"/>
</dbReference>
<dbReference type="FunFam" id="1.20.1280.40:FF:000001">
    <property type="entry name" value="Hemolysin expression modulator Hha"/>
    <property type="match status" value="1"/>
</dbReference>
<dbReference type="Gene3D" id="1.20.1280.40">
    <property type="entry name" value="HHA"/>
    <property type="match status" value="1"/>
</dbReference>
<dbReference type="InterPro" id="IPR007985">
    <property type="entry name" value="Hemolysn_expr_modulating_HHA"/>
</dbReference>
<dbReference type="InterPro" id="IPR036666">
    <property type="entry name" value="HHA_sf"/>
</dbReference>
<dbReference type="NCBIfam" id="NF008191">
    <property type="entry name" value="PRK10945.1"/>
    <property type="match status" value="1"/>
</dbReference>
<dbReference type="Pfam" id="PF05321">
    <property type="entry name" value="HHA"/>
    <property type="match status" value="1"/>
</dbReference>
<dbReference type="SUPFAM" id="SSF68989">
    <property type="entry name" value="Hemolysin expression modulating protein HHA"/>
    <property type="match status" value="1"/>
</dbReference>
<keyword id="KW-0238">DNA-binding</keyword>
<keyword id="KW-1185">Reference proteome</keyword>
<keyword id="KW-0678">Repressor</keyword>
<keyword id="KW-0804">Transcription</keyword>
<keyword id="KW-0805">Transcription regulation</keyword>
<gene>
    <name type="primary">hha</name>
    <name type="ordered locus">SF0405</name>
    <name type="ordered locus">S0412</name>
</gene>
<comment type="function">
    <text evidence="2">Down-regulates hemolysin expression, in complex with H-NS, and can also stimulate transposition events in vivo. Modifies the set of genes regulated by H-NS; Hha and Cnu (YdgT) increase the number of genes DNA bound by H-NS/StpA and may also modulate the oligomerization of the H-NS/StpA-complex. Binds DNA and influences DNA topology in response to environmental stimuli. Decreases biofilm formation (By similarity).</text>
</comment>
<comment type="subunit">
    <text evidence="2">Forms a heterotrimeric complex with the H-NS dimer.</text>
</comment>
<comment type="similarity">
    <text evidence="3">Belongs to the Hha/YmoA/Cnu family.</text>
</comment>
<evidence type="ECO:0000250" key="1"/>
<evidence type="ECO:0000250" key="2">
    <source>
        <dbReference type="UniProtKB" id="P0ACE3"/>
    </source>
</evidence>
<evidence type="ECO:0000305" key="3"/>
<feature type="chain" id="PRO_0000201730" description="Hemolysin expression-modulating protein Hha">
    <location>
        <begin position="1"/>
        <end position="72"/>
    </location>
</feature>
<feature type="site" description="Interacts with H-NS" evidence="1">
    <location>
        <position position="25"/>
    </location>
</feature>
<feature type="site" description="Interacts with H-NS" evidence="1">
    <location>
        <position position="48"/>
    </location>
</feature>
<sequence length="72" mass="8628">MSEKPLTKTDYLMRLRRCQTIDTLERVIEKNKYELSDNELAVFYSAADHRLAELTMNKLYDKIPSSVWKFIR</sequence>